<comment type="function">
    <text>Involved in oxygen transport from the lung to the various peripheral tissues.</text>
</comment>
<comment type="subunit">
    <text>Heterotetramer of two alpha chains and two beta chains.</text>
</comment>
<comment type="tissue specificity">
    <text>Red blood cells.</text>
</comment>
<comment type="similarity">
    <text evidence="3">Belongs to the globin family.</text>
</comment>
<feature type="initiator methionine" description="Removed" evidence="1">
    <location>
        <position position="1"/>
    </location>
</feature>
<feature type="chain" id="PRO_0000053127" description="Hemoglobin subunit beta">
    <location>
        <begin position="2"/>
        <end position="147"/>
    </location>
</feature>
<feature type="domain" description="Globin" evidence="3">
    <location>
        <begin position="3"/>
        <end position="147"/>
    </location>
</feature>
<feature type="binding site" description="distal binding residue">
    <location>
        <position position="64"/>
    </location>
    <ligand>
        <name>heme b</name>
        <dbReference type="ChEBI" id="CHEBI:60344"/>
    </ligand>
    <ligandPart>
        <name>Fe</name>
        <dbReference type="ChEBI" id="CHEBI:18248"/>
    </ligandPart>
</feature>
<feature type="binding site" description="proximal binding residue">
    <location>
        <position position="93"/>
    </location>
    <ligand>
        <name>heme b</name>
        <dbReference type="ChEBI" id="CHEBI:60344"/>
    </ligand>
    <ligandPart>
        <name>Fe</name>
        <dbReference type="ChEBI" id="CHEBI:18248"/>
    </ligandPart>
</feature>
<feature type="modified residue" description="N-acetylvaline" evidence="1">
    <location>
        <position position="2"/>
    </location>
</feature>
<feature type="modified residue" description="Phosphothreonine" evidence="2">
    <location>
        <position position="13"/>
    </location>
</feature>
<feature type="modified residue" description="Phosphoserine" evidence="2">
    <location>
        <position position="45"/>
    </location>
</feature>
<feature type="modified residue" description="N6-acetyllysine" evidence="2">
    <location>
        <position position="60"/>
    </location>
</feature>
<feature type="modified residue" description="N6-acetyllysine" evidence="2">
    <location>
        <position position="83"/>
    </location>
</feature>
<feature type="modified residue" description="S-nitrosocysteine" evidence="2">
    <location>
        <position position="94"/>
    </location>
</feature>
<feature type="modified residue" description="N6-acetyllysine" evidence="2">
    <location>
        <position position="145"/>
    </location>
</feature>
<name>HBB_CARSF</name>
<dbReference type="EMBL" id="J04429">
    <property type="protein sequence ID" value="AAA36956.1"/>
    <property type="molecule type" value="Genomic_DNA"/>
</dbReference>
<dbReference type="SMR" id="P13557"/>
<dbReference type="STRING" id="1868482.ENSTSYP00000007411"/>
<dbReference type="Ensembl" id="ENSTSYT00000008078">
    <property type="protein sequence ID" value="ENSTSYP00000007411"/>
    <property type="gene ID" value="ENSTSYG00000008115"/>
</dbReference>
<dbReference type="GeneID" id="103254684"/>
<dbReference type="KEGG" id="csyr:103254684"/>
<dbReference type="HOGENOM" id="CLU_003827_10_0_1"/>
<dbReference type="OMA" id="HAIVSIW"/>
<dbReference type="OrthoDB" id="9886081at2759"/>
<dbReference type="Proteomes" id="UP000189704">
    <property type="component" value="Unplaced"/>
</dbReference>
<dbReference type="GO" id="GO:0072562">
    <property type="term" value="C:blood microparticle"/>
    <property type="evidence" value="ECO:0007669"/>
    <property type="project" value="TreeGrafter"/>
</dbReference>
<dbReference type="GO" id="GO:0031838">
    <property type="term" value="C:haptoglobin-hemoglobin complex"/>
    <property type="evidence" value="ECO:0007669"/>
    <property type="project" value="TreeGrafter"/>
</dbReference>
<dbReference type="GO" id="GO:0005833">
    <property type="term" value="C:hemoglobin complex"/>
    <property type="evidence" value="ECO:0007669"/>
    <property type="project" value="InterPro"/>
</dbReference>
<dbReference type="GO" id="GO:0031720">
    <property type="term" value="F:haptoglobin binding"/>
    <property type="evidence" value="ECO:0007669"/>
    <property type="project" value="TreeGrafter"/>
</dbReference>
<dbReference type="GO" id="GO:0020037">
    <property type="term" value="F:heme binding"/>
    <property type="evidence" value="ECO:0007669"/>
    <property type="project" value="InterPro"/>
</dbReference>
<dbReference type="GO" id="GO:0031721">
    <property type="term" value="F:hemoglobin alpha binding"/>
    <property type="evidence" value="ECO:0007669"/>
    <property type="project" value="TreeGrafter"/>
</dbReference>
<dbReference type="GO" id="GO:0046872">
    <property type="term" value="F:metal ion binding"/>
    <property type="evidence" value="ECO:0007669"/>
    <property type="project" value="UniProtKB-KW"/>
</dbReference>
<dbReference type="GO" id="GO:0043177">
    <property type="term" value="F:organic acid binding"/>
    <property type="evidence" value="ECO:0007669"/>
    <property type="project" value="TreeGrafter"/>
</dbReference>
<dbReference type="GO" id="GO:0019825">
    <property type="term" value="F:oxygen binding"/>
    <property type="evidence" value="ECO:0007669"/>
    <property type="project" value="InterPro"/>
</dbReference>
<dbReference type="GO" id="GO:0005344">
    <property type="term" value="F:oxygen carrier activity"/>
    <property type="evidence" value="ECO:0007669"/>
    <property type="project" value="UniProtKB-KW"/>
</dbReference>
<dbReference type="GO" id="GO:0004601">
    <property type="term" value="F:peroxidase activity"/>
    <property type="evidence" value="ECO:0007669"/>
    <property type="project" value="TreeGrafter"/>
</dbReference>
<dbReference type="GO" id="GO:0042744">
    <property type="term" value="P:hydrogen peroxide catabolic process"/>
    <property type="evidence" value="ECO:0007669"/>
    <property type="project" value="TreeGrafter"/>
</dbReference>
<dbReference type="CDD" id="cd08925">
    <property type="entry name" value="Hb-beta-like"/>
    <property type="match status" value="1"/>
</dbReference>
<dbReference type="FunFam" id="1.10.490.10:FF:000001">
    <property type="entry name" value="Hemoglobin subunit beta"/>
    <property type="match status" value="1"/>
</dbReference>
<dbReference type="Gene3D" id="1.10.490.10">
    <property type="entry name" value="Globins"/>
    <property type="match status" value="1"/>
</dbReference>
<dbReference type="InterPro" id="IPR000971">
    <property type="entry name" value="Globin"/>
</dbReference>
<dbReference type="InterPro" id="IPR009050">
    <property type="entry name" value="Globin-like_sf"/>
</dbReference>
<dbReference type="InterPro" id="IPR012292">
    <property type="entry name" value="Globin/Proto"/>
</dbReference>
<dbReference type="InterPro" id="IPR002337">
    <property type="entry name" value="Hemoglobin_b"/>
</dbReference>
<dbReference type="InterPro" id="IPR050056">
    <property type="entry name" value="Hemoglobin_oxygen_transport"/>
</dbReference>
<dbReference type="PANTHER" id="PTHR11442">
    <property type="entry name" value="HEMOGLOBIN FAMILY MEMBER"/>
    <property type="match status" value="1"/>
</dbReference>
<dbReference type="PANTHER" id="PTHR11442:SF42">
    <property type="entry name" value="HEMOGLOBIN SUBUNIT BETA"/>
    <property type="match status" value="1"/>
</dbReference>
<dbReference type="Pfam" id="PF00042">
    <property type="entry name" value="Globin"/>
    <property type="match status" value="1"/>
</dbReference>
<dbReference type="PRINTS" id="PR00814">
    <property type="entry name" value="BETAHAEM"/>
</dbReference>
<dbReference type="SUPFAM" id="SSF46458">
    <property type="entry name" value="Globin-like"/>
    <property type="match status" value="1"/>
</dbReference>
<dbReference type="PROSITE" id="PS01033">
    <property type="entry name" value="GLOBIN"/>
    <property type="match status" value="1"/>
</dbReference>
<protein>
    <recommendedName>
        <fullName>Hemoglobin subunit beta</fullName>
    </recommendedName>
    <alternativeName>
        <fullName>Beta-globin</fullName>
    </alternativeName>
    <alternativeName>
        <fullName>Hemoglobin beta chain</fullName>
    </alternativeName>
</protein>
<sequence length="147" mass="16023">MVHLTAEEKAAVTALWGKVDVEDVGGEALGRLLVVYPWTQRFFDSFGDLSTPAAVMSNAKVKAHGKKVLNAFSDGMAHLDNLKGTFAKLSELHCDKLHVDPENFRLLGNVLVCVLAHHFGKEFTPQVQAAYQKVVAGVATALAHKYH</sequence>
<gene>
    <name type="primary">HBB</name>
</gene>
<reference key="1">
    <citation type="journal article" date="1989" name="J. Biol. Chem.">
        <title>Tarsius delta- and beta-globin genes: conversions, evolution, and systematic implications.</title>
        <authorList>
            <person name="Koop B.F."/>
            <person name="Siemieniak D."/>
            <person name="Slightom J.L."/>
            <person name="Goodman M."/>
            <person name="Dunbar J."/>
            <person name="Wright P.C."/>
            <person name="Simons E.L."/>
        </authorList>
    </citation>
    <scope>NUCLEOTIDE SEQUENCE [GENOMIC DNA]</scope>
</reference>
<organism>
    <name type="scientific">Carlito syrichta</name>
    <name type="common">Philippine tarsier</name>
    <name type="synonym">Tarsius syrichta</name>
    <dbReference type="NCBI Taxonomy" id="1868482"/>
    <lineage>
        <taxon>Eukaryota</taxon>
        <taxon>Metazoa</taxon>
        <taxon>Chordata</taxon>
        <taxon>Craniata</taxon>
        <taxon>Vertebrata</taxon>
        <taxon>Euteleostomi</taxon>
        <taxon>Mammalia</taxon>
        <taxon>Eutheria</taxon>
        <taxon>Euarchontoglires</taxon>
        <taxon>Primates</taxon>
        <taxon>Haplorrhini</taxon>
        <taxon>Tarsiiformes</taxon>
        <taxon>Tarsiidae</taxon>
        <taxon>Carlito</taxon>
    </lineage>
</organism>
<proteinExistence type="evidence at transcript level"/>
<keyword id="KW-0007">Acetylation</keyword>
<keyword id="KW-0349">Heme</keyword>
<keyword id="KW-0408">Iron</keyword>
<keyword id="KW-0479">Metal-binding</keyword>
<keyword id="KW-0561">Oxygen transport</keyword>
<keyword id="KW-0597">Phosphoprotein</keyword>
<keyword id="KW-1185">Reference proteome</keyword>
<keyword id="KW-0702">S-nitrosylation</keyword>
<keyword id="KW-0813">Transport</keyword>
<evidence type="ECO:0000250" key="1">
    <source>
        <dbReference type="UniProtKB" id="P02086"/>
    </source>
</evidence>
<evidence type="ECO:0000250" key="2">
    <source>
        <dbReference type="UniProtKB" id="P68871"/>
    </source>
</evidence>
<evidence type="ECO:0000255" key="3">
    <source>
        <dbReference type="PROSITE-ProRule" id="PRU00238"/>
    </source>
</evidence>
<accession>P13557</accession>